<evidence type="ECO:0000255" key="1">
    <source>
        <dbReference type="HAMAP-Rule" id="MF_01310"/>
    </source>
</evidence>
<evidence type="ECO:0000305" key="2"/>
<reference key="1">
    <citation type="journal article" date="2006" name="Environ. Microbiol.">
        <title>Whole genome analysis of the marine Bacteroidetes'Gramella forsetii' reveals adaptations to degradation of polymeric organic matter.</title>
        <authorList>
            <person name="Bauer M."/>
            <person name="Kube M."/>
            <person name="Teeling H."/>
            <person name="Richter M."/>
            <person name="Lombardot T."/>
            <person name="Allers E."/>
            <person name="Wuerdemann C.A."/>
            <person name="Quast C."/>
            <person name="Kuhl H."/>
            <person name="Knaust F."/>
            <person name="Woebken D."/>
            <person name="Bischof K."/>
            <person name="Mussmann M."/>
            <person name="Choudhuri J.V."/>
            <person name="Meyer F."/>
            <person name="Reinhardt R."/>
            <person name="Amann R.I."/>
            <person name="Gloeckner F.O."/>
        </authorList>
    </citation>
    <scope>NUCLEOTIDE SEQUENCE [LARGE SCALE GENOMIC DNA]</scope>
    <source>
        <strain>DSM 17595 / CGMCC 1.15422 / KT0803</strain>
    </source>
</reference>
<protein>
    <recommendedName>
        <fullName evidence="1">Small ribosomal subunit protein uS11</fullName>
    </recommendedName>
    <alternativeName>
        <fullName evidence="2">30S ribosomal protein S11</fullName>
    </alternativeName>
</protein>
<organism>
    <name type="scientific">Christiangramia forsetii (strain DSM 17595 / CGMCC 1.15422 / KT0803)</name>
    <name type="common">Gramella forsetii</name>
    <dbReference type="NCBI Taxonomy" id="411154"/>
    <lineage>
        <taxon>Bacteria</taxon>
        <taxon>Pseudomonadati</taxon>
        <taxon>Bacteroidota</taxon>
        <taxon>Flavobacteriia</taxon>
        <taxon>Flavobacteriales</taxon>
        <taxon>Flavobacteriaceae</taxon>
        <taxon>Christiangramia</taxon>
    </lineage>
</organism>
<comment type="function">
    <text evidence="1">Located on the platform of the 30S subunit, it bridges several disparate RNA helices of the 16S rRNA. Forms part of the Shine-Dalgarno cleft in the 70S ribosome.</text>
</comment>
<comment type="subunit">
    <text evidence="1">Part of the 30S ribosomal subunit. Interacts with proteins S7 and S18. Binds to IF-3.</text>
</comment>
<comment type="similarity">
    <text evidence="1">Belongs to the universal ribosomal protein uS11 family.</text>
</comment>
<proteinExistence type="inferred from homology"/>
<sequence length="133" mass="14356">MAKKANPKAKTQKKRKVVVESNGEAHVTASFNNIIISLTNKKGDVVAWSSAGKMGFRGSKKNTPYAAQLAAEDASKVAHEAGMRKVKVYVKGPGNGRESAIRAVHNSGIEVTEIIDITPLPHNGCRPPKRRRV</sequence>
<keyword id="KW-0687">Ribonucleoprotein</keyword>
<keyword id="KW-0689">Ribosomal protein</keyword>
<keyword id="KW-0694">RNA-binding</keyword>
<keyword id="KW-0699">rRNA-binding</keyword>
<feature type="chain" id="PRO_0000294764" description="Small ribosomal subunit protein uS11">
    <location>
        <begin position="1"/>
        <end position="133"/>
    </location>
</feature>
<accession>A0M575</accession>
<name>RS11_CHRFK</name>
<dbReference type="EMBL" id="CU207366">
    <property type="protein sequence ID" value="CAL67770.1"/>
    <property type="molecule type" value="Genomic_DNA"/>
</dbReference>
<dbReference type="RefSeq" id="WP_011710673.1">
    <property type="nucleotide sequence ID" value="NC_008571.1"/>
</dbReference>
<dbReference type="SMR" id="A0M575"/>
<dbReference type="STRING" id="411154.GFO_2816"/>
<dbReference type="KEGG" id="gfo:GFO_2816"/>
<dbReference type="eggNOG" id="COG0100">
    <property type="taxonomic scope" value="Bacteria"/>
</dbReference>
<dbReference type="HOGENOM" id="CLU_072439_5_3_10"/>
<dbReference type="OrthoDB" id="9806415at2"/>
<dbReference type="Proteomes" id="UP000000755">
    <property type="component" value="Chromosome"/>
</dbReference>
<dbReference type="GO" id="GO:1990904">
    <property type="term" value="C:ribonucleoprotein complex"/>
    <property type="evidence" value="ECO:0007669"/>
    <property type="project" value="UniProtKB-KW"/>
</dbReference>
<dbReference type="GO" id="GO:0005840">
    <property type="term" value="C:ribosome"/>
    <property type="evidence" value="ECO:0007669"/>
    <property type="project" value="UniProtKB-KW"/>
</dbReference>
<dbReference type="GO" id="GO:0019843">
    <property type="term" value="F:rRNA binding"/>
    <property type="evidence" value="ECO:0007669"/>
    <property type="project" value="UniProtKB-UniRule"/>
</dbReference>
<dbReference type="GO" id="GO:0003735">
    <property type="term" value="F:structural constituent of ribosome"/>
    <property type="evidence" value="ECO:0007669"/>
    <property type="project" value="InterPro"/>
</dbReference>
<dbReference type="GO" id="GO:0006412">
    <property type="term" value="P:translation"/>
    <property type="evidence" value="ECO:0007669"/>
    <property type="project" value="UniProtKB-UniRule"/>
</dbReference>
<dbReference type="FunFam" id="3.30.420.80:FF:000004">
    <property type="entry name" value="30S ribosomal protein S11"/>
    <property type="match status" value="1"/>
</dbReference>
<dbReference type="Gene3D" id="3.30.420.80">
    <property type="entry name" value="Ribosomal protein S11"/>
    <property type="match status" value="1"/>
</dbReference>
<dbReference type="HAMAP" id="MF_01310">
    <property type="entry name" value="Ribosomal_uS11"/>
    <property type="match status" value="1"/>
</dbReference>
<dbReference type="InterPro" id="IPR001971">
    <property type="entry name" value="Ribosomal_uS11"/>
</dbReference>
<dbReference type="InterPro" id="IPR019981">
    <property type="entry name" value="Ribosomal_uS11_bac-type"/>
</dbReference>
<dbReference type="InterPro" id="IPR018102">
    <property type="entry name" value="Ribosomal_uS11_CS"/>
</dbReference>
<dbReference type="InterPro" id="IPR036967">
    <property type="entry name" value="Ribosomal_uS11_sf"/>
</dbReference>
<dbReference type="NCBIfam" id="NF003698">
    <property type="entry name" value="PRK05309.1"/>
    <property type="match status" value="1"/>
</dbReference>
<dbReference type="NCBIfam" id="TIGR03632">
    <property type="entry name" value="uS11_bact"/>
    <property type="match status" value="1"/>
</dbReference>
<dbReference type="PANTHER" id="PTHR11759">
    <property type="entry name" value="40S RIBOSOMAL PROTEIN S14/30S RIBOSOMAL PROTEIN S11"/>
    <property type="match status" value="1"/>
</dbReference>
<dbReference type="Pfam" id="PF00411">
    <property type="entry name" value="Ribosomal_S11"/>
    <property type="match status" value="1"/>
</dbReference>
<dbReference type="PIRSF" id="PIRSF002131">
    <property type="entry name" value="Ribosomal_S11"/>
    <property type="match status" value="1"/>
</dbReference>
<dbReference type="SUPFAM" id="SSF53137">
    <property type="entry name" value="Translational machinery components"/>
    <property type="match status" value="1"/>
</dbReference>
<dbReference type="PROSITE" id="PS00054">
    <property type="entry name" value="RIBOSOMAL_S11"/>
    <property type="match status" value="1"/>
</dbReference>
<gene>
    <name evidence="1" type="primary">rpsK</name>
    <name type="ordered locus">GFO_2816</name>
</gene>